<comment type="function">
    <text evidence="2 3">Scaffold protein that plays an essential role in cytoplasmic stress granule formation which acts as a platform for antiviral signaling. Plays an essential role in stress granule formation. Stress granules are membraneless compartments that store mRNAs and proteins, such as stalled translation pre-initiation complexes, in response to stress (By similarity). Promotes formation of stress granules phase-separated membraneless compartment by undergoing liquid-liquid phase separation (LLPS) upon unfolded RNA-binding: functions as a molecular switch that triggers RNA-dependent LLPS in response to a rise in intracellular free RNA concentrations (By similarity).</text>
</comment>
<comment type="activity regulation">
    <text evidence="2">Under physiological conditions, G3BP2 adopts a compact state that is stabilized by intramolecular interactions between the RG-rich and the acidic regions that inhibit phase separation. Upon stress, polysomes disassemble and mRNAs are released in an unfolded protein-free state. Binding of unfolded mRNA to G3BP2 outcompetes the intramolecular interactions and RNA-bound G3BP2 adopts an expanded conformation in which the RG-rich region becomes exposed to engage in protein-protein and protein-RNA interactions, allowing physical cross-linking of RNA molecules to form protein-RNA condensates, leading to liquid-liquid phase separation (LLPS).</text>
</comment>
<comment type="subunit">
    <text evidence="3">Forms homooligomers. Forms heterodimers with G3BP1. Interacts with NFKBIA (via N-terminus). Interacts (via NTF2 domain) with USP10; inhibiting stress granule formation. Interacts (via NTF2 domain) with CAPRIN1; promoting stress granule formation. Associates (via RG-rich region) with 40S ribosome subunits. Interacts with PABPC1.</text>
</comment>
<comment type="subcellular location">
    <subcellularLocation>
        <location evidence="3">Cytoplasm</location>
    </subcellularLocation>
    <subcellularLocation>
        <location evidence="3">Cytoplasm</location>
        <location evidence="3">Stress granule</location>
    </subcellularLocation>
</comment>
<comment type="domain">
    <text evidence="2">Can mediate both protein-protein and protein-RNA interactions via the NTF2 domain and RNA-binding domain RRM; protein-protein and protein-RNA interactions are essential for undergoing liquid-liquid phase separation (LLPS).</text>
</comment>
<comment type="domain">
    <text evidence="2">The acidic disordered region acts as a negative regulator of phase separation.</text>
</comment>
<comment type="domain">
    <text evidence="2">The NTF2 domain mediates interaction with CAPRIN1 and USP10 regulators, thereby regulating assembly of stress granules.</text>
</comment>
<evidence type="ECO:0000250" key="1">
    <source>
        <dbReference type="UniProtKB" id="P97379"/>
    </source>
</evidence>
<evidence type="ECO:0000250" key="2">
    <source>
        <dbReference type="UniProtKB" id="Q13283"/>
    </source>
</evidence>
<evidence type="ECO:0000250" key="3">
    <source>
        <dbReference type="UniProtKB" id="Q9UN86"/>
    </source>
</evidence>
<evidence type="ECO:0000255" key="4">
    <source>
        <dbReference type="PROSITE-ProRule" id="PRU00137"/>
    </source>
</evidence>
<evidence type="ECO:0000255" key="5">
    <source>
        <dbReference type="PROSITE-ProRule" id="PRU00176"/>
    </source>
</evidence>
<evidence type="ECO:0000256" key="6">
    <source>
        <dbReference type="SAM" id="MobiDB-lite"/>
    </source>
</evidence>
<evidence type="ECO:0000305" key="7"/>
<feature type="chain" id="PRO_0000271372" description="Ras GTPase-activating protein-binding protein 2">
    <location>
        <begin position="1"/>
        <end position="482"/>
    </location>
</feature>
<feature type="domain" description="NTF2" evidence="4">
    <location>
        <begin position="11"/>
        <end position="133"/>
    </location>
</feature>
<feature type="domain" description="RRM" evidence="5">
    <location>
        <begin position="331"/>
        <end position="409"/>
    </location>
</feature>
<feature type="region of interest" description="Disordered" evidence="6">
    <location>
        <begin position="140"/>
        <end position="171"/>
    </location>
</feature>
<feature type="region of interest" description="Acidic disordered region" evidence="2">
    <location>
        <begin position="142"/>
        <end position="220"/>
    </location>
</feature>
<feature type="region of interest" description="Disordered" evidence="6">
    <location>
        <begin position="187"/>
        <end position="318"/>
    </location>
</feature>
<feature type="region of interest" description="RG-rich region" evidence="2">
    <location>
        <begin position="404"/>
        <end position="476"/>
    </location>
</feature>
<feature type="region of interest" description="Disordered" evidence="6">
    <location>
        <begin position="408"/>
        <end position="482"/>
    </location>
</feature>
<feature type="compositionally biased region" description="Acidic residues" evidence="6">
    <location>
        <begin position="140"/>
        <end position="158"/>
    </location>
</feature>
<feature type="compositionally biased region" description="Basic and acidic residues" evidence="6">
    <location>
        <begin position="191"/>
        <end position="225"/>
    </location>
</feature>
<feature type="compositionally biased region" description="Polar residues" evidence="6">
    <location>
        <begin position="247"/>
        <end position="264"/>
    </location>
</feature>
<feature type="compositionally biased region" description="Basic and acidic residues" evidence="6">
    <location>
        <begin position="290"/>
        <end position="300"/>
    </location>
</feature>
<feature type="compositionally biased region" description="Basic and acidic residues" evidence="6">
    <location>
        <begin position="408"/>
        <end position="432"/>
    </location>
</feature>
<feature type="compositionally biased region" description="Gly residues" evidence="6">
    <location>
        <begin position="433"/>
        <end position="445"/>
    </location>
</feature>
<feature type="modified residue" description="Phosphoserine" evidence="3">
    <location>
        <position position="141"/>
    </location>
</feature>
<feature type="modified residue" description="Phosphoserine" evidence="3">
    <location>
        <position position="149"/>
    </location>
</feature>
<feature type="modified residue" description="Phosphoserine" evidence="1">
    <location>
        <position position="225"/>
    </location>
</feature>
<feature type="modified residue" description="Phosphothreonine" evidence="3">
    <location>
        <position position="227"/>
    </location>
</feature>
<feature type="modified residue" description="N6-succinyllysine" evidence="1">
    <location>
        <position position="392"/>
    </location>
</feature>
<feature type="modified residue" description="Omega-N-methylarginine" evidence="3">
    <location>
        <position position="457"/>
    </location>
</feature>
<feature type="modified residue" description="Phosphoserine" evidence="3">
    <location>
        <position position="466"/>
    </location>
</feature>
<feature type="modified residue" description="Omega-N-methylarginine" evidence="1">
    <location>
        <position position="468"/>
    </location>
</feature>
<feature type="cross-link" description="Glycyl lysine isopeptide (Lys-Gly) (interchain with G-Cter in SUMO2)" evidence="3">
    <location>
        <position position="281"/>
    </location>
</feature>
<feature type="sequence conflict" description="In Ref. 1; CAH91236." evidence="7" ref="1">
    <original>G</original>
    <variation>D</variation>
    <location>
        <position position="310"/>
    </location>
</feature>
<name>G3BP2_PONAB</name>
<gene>
    <name type="primary">G3BP2</name>
</gene>
<sequence>MVMEKPSPLLVGREFVRQYYTLLNKAPEYLHRFYGRNSSYVHGGVDASGKPQEAVYGQNDIHHKVLSLNFSECHTKIRHVDAHATLSDGVVVQVMGLLSNSGQPERKFMQTFVLAPEGSVPNKFYVHNDMFRYEDEVFGDSEPELDEESEDEVEEEQEERQPSPEPVQENANSGYYEAHPVTNGIEEPLEESSHEPEPEPESETKTEELKPQVEEKNLEELEEKSTTPPPAEPVSLPQEPPKAFSWASVTSKNLPPSGTVSSSGIPPHVKAPVSQPRVEAKPEVQSQPPRVREQRPRERPGFPPRGPRPGRGDMEQNDSDNRRIIRYPDSHQLFVGNLPHDIDENELKEFFMSFGNVVELRINTKGVGGKLPNFGFVVFDDSEPVQRILIAKPIMFRGEVRLNVEEKKTRAARERETRGGGDDRRDIRRNDRGPGGPRGIVGGGMMRDRDGRGPPPRGGMAQKLGSGRGTGQMEGRFTGQRR</sequence>
<accession>Q5R9L3</accession>
<accession>Q5RAH4</accession>
<reference key="1">
    <citation type="submission" date="2004-11" db="EMBL/GenBank/DDBJ databases">
        <authorList>
            <consortium name="The German cDNA consortium"/>
        </authorList>
    </citation>
    <scope>NUCLEOTIDE SEQUENCE [LARGE SCALE MRNA]</scope>
    <source>
        <tissue>Brain cortex</tissue>
    </source>
</reference>
<organism>
    <name type="scientific">Pongo abelii</name>
    <name type="common">Sumatran orangutan</name>
    <name type="synonym">Pongo pygmaeus abelii</name>
    <dbReference type="NCBI Taxonomy" id="9601"/>
    <lineage>
        <taxon>Eukaryota</taxon>
        <taxon>Metazoa</taxon>
        <taxon>Chordata</taxon>
        <taxon>Craniata</taxon>
        <taxon>Vertebrata</taxon>
        <taxon>Euteleostomi</taxon>
        <taxon>Mammalia</taxon>
        <taxon>Eutheria</taxon>
        <taxon>Euarchontoglires</taxon>
        <taxon>Primates</taxon>
        <taxon>Haplorrhini</taxon>
        <taxon>Catarrhini</taxon>
        <taxon>Hominidae</taxon>
        <taxon>Pongo</taxon>
    </lineage>
</organism>
<dbReference type="EMBL" id="CR859041">
    <property type="protein sequence ID" value="CAH91236.1"/>
    <property type="molecule type" value="mRNA"/>
</dbReference>
<dbReference type="EMBL" id="CR859374">
    <property type="protein sequence ID" value="CAH91547.1"/>
    <property type="molecule type" value="mRNA"/>
</dbReference>
<dbReference type="RefSeq" id="NP_001125730.1">
    <property type="nucleotide sequence ID" value="NM_001132258.1"/>
</dbReference>
<dbReference type="RefSeq" id="XP_009238363.1">
    <property type="nucleotide sequence ID" value="XM_009240088.4"/>
</dbReference>
<dbReference type="RefSeq" id="XP_009238364.1">
    <property type="nucleotide sequence ID" value="XM_009240089.1"/>
</dbReference>
<dbReference type="RefSeq" id="XP_009238366.1">
    <property type="nucleotide sequence ID" value="XM_009240091.1"/>
</dbReference>
<dbReference type="RefSeq" id="XP_054409213.1">
    <property type="nucleotide sequence ID" value="XM_054553238.2"/>
</dbReference>
<dbReference type="RefSeq" id="XP_054409214.1">
    <property type="nucleotide sequence ID" value="XM_054553239.2"/>
</dbReference>
<dbReference type="RefSeq" id="XP_054409215.1">
    <property type="nucleotide sequence ID" value="XM_054553240.2"/>
</dbReference>
<dbReference type="RefSeq" id="XP_063578835.1">
    <property type="nucleotide sequence ID" value="XM_063722765.1"/>
</dbReference>
<dbReference type="RefSeq" id="XP_063578838.1">
    <property type="nucleotide sequence ID" value="XM_063722768.1"/>
</dbReference>
<dbReference type="RefSeq" id="XP_063578841.1">
    <property type="nucleotide sequence ID" value="XM_063722771.1"/>
</dbReference>
<dbReference type="SMR" id="Q5R9L3"/>
<dbReference type="FunCoup" id="Q5R9L3">
    <property type="interactions" value="2488"/>
</dbReference>
<dbReference type="STRING" id="9601.ENSPPYP00000016578"/>
<dbReference type="Ensembl" id="ENSPPYT00000034523.1">
    <property type="protein sequence ID" value="ENSPPYP00000025619.1"/>
    <property type="gene ID" value="ENSPPYG00000014846.2"/>
</dbReference>
<dbReference type="GeneID" id="100172655"/>
<dbReference type="KEGG" id="pon:100172655"/>
<dbReference type="CTD" id="9908"/>
<dbReference type="eggNOG" id="KOG0116">
    <property type="taxonomic scope" value="Eukaryota"/>
</dbReference>
<dbReference type="GeneTree" id="ENSGT00390000011365"/>
<dbReference type="HOGENOM" id="CLU_022209_0_2_1"/>
<dbReference type="InParanoid" id="Q5R9L3"/>
<dbReference type="OMA" id="RPRGNAY"/>
<dbReference type="OrthoDB" id="339151at2759"/>
<dbReference type="TreeFam" id="TF325464"/>
<dbReference type="Proteomes" id="UP000001595">
    <property type="component" value="Chromosome 4"/>
</dbReference>
<dbReference type="GO" id="GO:0010494">
    <property type="term" value="C:cytoplasmic stress granule"/>
    <property type="evidence" value="ECO:0007669"/>
    <property type="project" value="UniProtKB-SubCell"/>
</dbReference>
<dbReference type="GO" id="GO:0005829">
    <property type="term" value="C:cytosol"/>
    <property type="evidence" value="ECO:0007669"/>
    <property type="project" value="Ensembl"/>
</dbReference>
<dbReference type="GO" id="GO:1990904">
    <property type="term" value="C:ribonucleoprotein complex"/>
    <property type="evidence" value="ECO:0007669"/>
    <property type="project" value="TreeGrafter"/>
</dbReference>
<dbReference type="GO" id="GO:0140693">
    <property type="term" value="F:molecular condensate scaffold activity"/>
    <property type="evidence" value="ECO:0000250"/>
    <property type="project" value="UniProtKB"/>
</dbReference>
<dbReference type="GO" id="GO:0003729">
    <property type="term" value="F:mRNA binding"/>
    <property type="evidence" value="ECO:0007669"/>
    <property type="project" value="TreeGrafter"/>
</dbReference>
<dbReference type="GO" id="GO:0045087">
    <property type="term" value="P:innate immune response"/>
    <property type="evidence" value="ECO:0007669"/>
    <property type="project" value="UniProtKB-KW"/>
</dbReference>
<dbReference type="GO" id="GO:0051028">
    <property type="term" value="P:mRNA transport"/>
    <property type="evidence" value="ECO:0007669"/>
    <property type="project" value="UniProtKB-KW"/>
</dbReference>
<dbReference type="GO" id="GO:0051260">
    <property type="term" value="P:protein homooligomerization"/>
    <property type="evidence" value="ECO:0007669"/>
    <property type="project" value="Ensembl"/>
</dbReference>
<dbReference type="GO" id="GO:0034063">
    <property type="term" value="P:stress granule assembly"/>
    <property type="evidence" value="ECO:0000250"/>
    <property type="project" value="UniProtKB"/>
</dbReference>
<dbReference type="CDD" id="cd00780">
    <property type="entry name" value="NTF2"/>
    <property type="match status" value="1"/>
</dbReference>
<dbReference type="CDD" id="cd12464">
    <property type="entry name" value="RRM_G3BP2"/>
    <property type="match status" value="1"/>
</dbReference>
<dbReference type="FunFam" id="3.10.450.50:FF:000002">
    <property type="entry name" value="Ras GTPase-activating protein-binding protein 2 isoform 1"/>
    <property type="match status" value="1"/>
</dbReference>
<dbReference type="FunFam" id="3.30.70.330:FF:000327">
    <property type="entry name" value="ras GTPase-activating protein-binding protein 2 isoform X1"/>
    <property type="match status" value="1"/>
</dbReference>
<dbReference type="Gene3D" id="3.10.450.50">
    <property type="match status" value="1"/>
</dbReference>
<dbReference type="Gene3D" id="3.30.70.330">
    <property type="match status" value="1"/>
</dbReference>
<dbReference type="InterPro" id="IPR034376">
    <property type="entry name" value="G3BP2_RRM"/>
</dbReference>
<dbReference type="InterPro" id="IPR032710">
    <property type="entry name" value="NTF2-like_dom_sf"/>
</dbReference>
<dbReference type="InterPro" id="IPR002075">
    <property type="entry name" value="NTF2_dom"/>
</dbReference>
<dbReference type="InterPro" id="IPR018222">
    <property type="entry name" value="Nuclear_transport_factor_2_euk"/>
</dbReference>
<dbReference type="InterPro" id="IPR012677">
    <property type="entry name" value="Nucleotide-bd_a/b_plait_sf"/>
</dbReference>
<dbReference type="InterPro" id="IPR039539">
    <property type="entry name" value="Ras_GTPase_bind_prot"/>
</dbReference>
<dbReference type="InterPro" id="IPR035979">
    <property type="entry name" value="RBD_domain_sf"/>
</dbReference>
<dbReference type="InterPro" id="IPR000504">
    <property type="entry name" value="RRM_dom"/>
</dbReference>
<dbReference type="PANTHER" id="PTHR10693">
    <property type="entry name" value="RAS GTPASE-ACTIVATING PROTEIN-BINDING PROTEIN"/>
    <property type="match status" value="1"/>
</dbReference>
<dbReference type="PANTHER" id="PTHR10693:SF10">
    <property type="entry name" value="RAS GTPASE-ACTIVATING PROTEIN-BINDING PROTEIN 2"/>
    <property type="match status" value="1"/>
</dbReference>
<dbReference type="Pfam" id="PF02136">
    <property type="entry name" value="NTF2"/>
    <property type="match status" value="1"/>
</dbReference>
<dbReference type="Pfam" id="PF00076">
    <property type="entry name" value="RRM_1"/>
    <property type="match status" value="1"/>
</dbReference>
<dbReference type="SMART" id="SM00360">
    <property type="entry name" value="RRM"/>
    <property type="match status" value="1"/>
</dbReference>
<dbReference type="SUPFAM" id="SSF54427">
    <property type="entry name" value="NTF2-like"/>
    <property type="match status" value="1"/>
</dbReference>
<dbReference type="SUPFAM" id="SSF54928">
    <property type="entry name" value="RNA-binding domain, RBD"/>
    <property type="match status" value="1"/>
</dbReference>
<dbReference type="PROSITE" id="PS50177">
    <property type="entry name" value="NTF2_DOMAIN"/>
    <property type="match status" value="1"/>
</dbReference>
<dbReference type="PROSITE" id="PS50102">
    <property type="entry name" value="RRM"/>
    <property type="match status" value="1"/>
</dbReference>
<keyword id="KW-0963">Cytoplasm</keyword>
<keyword id="KW-0391">Immunity</keyword>
<keyword id="KW-0399">Innate immunity</keyword>
<keyword id="KW-1017">Isopeptide bond</keyword>
<keyword id="KW-0488">Methylation</keyword>
<keyword id="KW-0509">mRNA transport</keyword>
<keyword id="KW-0597">Phosphoprotein</keyword>
<keyword id="KW-1185">Reference proteome</keyword>
<keyword id="KW-0694">RNA-binding</keyword>
<keyword id="KW-0813">Transport</keyword>
<keyword id="KW-0832">Ubl conjugation</keyword>
<proteinExistence type="evidence at transcript level"/>
<protein>
    <recommendedName>
        <fullName>Ras GTPase-activating protein-binding protein 2</fullName>
        <shortName>G3BP-2</shortName>
    </recommendedName>
    <alternativeName>
        <fullName>GAP SH3 domain-binding protein 2</fullName>
    </alternativeName>
</protein>